<protein>
    <recommendedName>
        <fullName>Bacteriocin carnobacteriocin-A</fullName>
    </recommendedName>
    <alternativeName>
        <fullName>Piscicolin-61</fullName>
    </alternativeName>
</protein>
<gene>
    <name type="primary">cbnBA</name>
    <name type="synonym">psc61</name>
</gene>
<organism>
    <name type="scientific">Carnobacterium maltaromaticum</name>
    <name type="common">Carnobacterium piscicola</name>
    <dbReference type="NCBI Taxonomy" id="2751"/>
    <lineage>
        <taxon>Bacteria</taxon>
        <taxon>Bacillati</taxon>
        <taxon>Bacillota</taxon>
        <taxon>Bacilli</taxon>
        <taxon>Lactobacillales</taxon>
        <taxon>Carnobacteriaceae</taxon>
        <taxon>Carnobacterium</taxon>
    </lineage>
</organism>
<accession>P38578</accession>
<name>CBA_CARML</name>
<feature type="propeptide" id="PRO_0000002760">
    <location>
        <begin position="1"/>
        <end position="18"/>
    </location>
</feature>
<feature type="chain" id="PRO_0000002761" description="Bacteriocin carnobacteriocin-A">
    <location>
        <begin position="19"/>
        <end position="71"/>
    </location>
</feature>
<feature type="disulfide bond" evidence="1">
    <location>
        <begin position="40"/>
        <end position="69"/>
    </location>
</feature>
<sequence length="71" mass="7041">MNNVKELSIKEMQQVTGGDQMSDGVNYGKGSSLSKGGAKCGLGIVGGLATIPSGPLGWLAGAAGVINSCMK</sequence>
<geneLocation type="plasmid">
    <name>74 kb</name>
</geneLocation>
<reference key="1">
    <citation type="journal article" date="1994" name="Microbiology">
        <title>Characteristics and genetic determinant of a hydrophobic peptide bacteriocin, carnobacteriocin A, produced by Carnobacterium piscicola LV17A.</title>
        <authorList>
            <person name="Worobo R.W."/>
            <person name="Henkel T."/>
            <person name="Sailer M."/>
            <person name="Roy K.L."/>
            <person name="Vederas J.C."/>
            <person name="Stiles M.E."/>
        </authorList>
    </citation>
    <scope>NUCLEOTIDE SEQUENCE [GENOMIC DNA]</scope>
    <scope>PARTIAL PROTEIN SEQUENCE</scope>
    <source>
        <strain>LV17A</strain>
    </source>
</reference>
<reference key="2">
    <citation type="journal article" date="1994" name="Curr. Microbiol.">
        <title>Purification and cloning of piscicolin 61, a bacteriocin from Carnobacterium piscicola LV61.</title>
        <authorList>
            <person name="Holck A.L."/>
            <person name="Axelsson L."/>
            <person name="Schillinger U."/>
        </authorList>
    </citation>
    <scope>NUCLEOTIDE SEQUENCE [GENOMIC DNA]</scope>
    <source>
        <strain>LV61</strain>
    </source>
</reference>
<dbReference type="EMBL" id="L23112">
    <property type="protein sequence ID" value="AAA23016.1"/>
    <property type="molecule type" value="Genomic_DNA"/>
</dbReference>
<dbReference type="EMBL" id="Z26650">
    <property type="protein sequence ID" value="CAA81391.1"/>
    <property type="molecule type" value="Genomic_DNA"/>
</dbReference>
<dbReference type="PIR" id="I40863">
    <property type="entry name" value="I40863"/>
</dbReference>
<dbReference type="TCDB" id="1.C.22.1.3">
    <property type="family name" value="the lactococcin a (lactococcin a) family"/>
</dbReference>
<dbReference type="GO" id="GO:0005576">
    <property type="term" value="C:extracellular region"/>
    <property type="evidence" value="ECO:0007669"/>
    <property type="project" value="UniProtKB-SubCell"/>
</dbReference>
<dbReference type="GO" id="GO:0042742">
    <property type="term" value="P:defense response to bacterium"/>
    <property type="evidence" value="ECO:0007669"/>
    <property type="project" value="UniProtKB-KW"/>
</dbReference>
<dbReference type="GO" id="GO:0031640">
    <property type="term" value="P:killing of cells of another organism"/>
    <property type="evidence" value="ECO:0007669"/>
    <property type="project" value="UniProtKB-KW"/>
</dbReference>
<dbReference type="InterPro" id="IPR010133">
    <property type="entry name" value="Bacteriocin_signal_seq"/>
</dbReference>
<dbReference type="NCBIfam" id="TIGR01847">
    <property type="entry name" value="bacteriocin_sig"/>
    <property type="match status" value="1"/>
</dbReference>
<proteinExistence type="evidence at protein level"/>
<comment type="function">
    <text>Has antibacterial activity.</text>
</comment>
<comment type="subcellular location">
    <subcellularLocation>
        <location>Secreted</location>
    </subcellularLocation>
</comment>
<evidence type="ECO:0000269" key="1">
    <source>
    </source>
</evidence>
<keyword id="KW-0044">Antibiotic</keyword>
<keyword id="KW-0929">Antimicrobial</keyword>
<keyword id="KW-0078">Bacteriocin</keyword>
<keyword id="KW-0903">Direct protein sequencing</keyword>
<keyword id="KW-1015">Disulfide bond</keyword>
<keyword id="KW-0614">Plasmid</keyword>
<keyword id="KW-0964">Secreted</keyword>